<dbReference type="EC" id="1.1.1.333" evidence="1"/>
<dbReference type="EMBL" id="AE000516">
    <property type="protein sequence ID" value="AAK48264.1"/>
    <property type="molecule type" value="Genomic_DNA"/>
</dbReference>
<dbReference type="PIR" id="C70697">
    <property type="entry name" value="C70697"/>
</dbReference>
<dbReference type="RefSeq" id="WP_003420632.1">
    <property type="nucleotide sequence ID" value="NZ_KK341227.1"/>
</dbReference>
<dbReference type="SMR" id="P9WGS8"/>
<dbReference type="KEGG" id="mtc:MT3899"/>
<dbReference type="PATRIC" id="fig|83331.31.peg.4195"/>
<dbReference type="HOGENOM" id="CLU_010194_2_1_11"/>
<dbReference type="UniPathway" id="UPA00963"/>
<dbReference type="Proteomes" id="UP000001020">
    <property type="component" value="Chromosome"/>
</dbReference>
<dbReference type="GO" id="GO:0042597">
    <property type="term" value="C:periplasmic space"/>
    <property type="evidence" value="ECO:0007669"/>
    <property type="project" value="UniProtKB-SubCell"/>
</dbReference>
<dbReference type="GO" id="GO:0016491">
    <property type="term" value="F:oxidoreductase activity"/>
    <property type="evidence" value="ECO:0007669"/>
    <property type="project" value="UniProtKB-KW"/>
</dbReference>
<dbReference type="GO" id="GO:0045227">
    <property type="term" value="P:capsule polysaccharide biosynthetic process"/>
    <property type="evidence" value="ECO:0007669"/>
    <property type="project" value="UniProtKB-UniPathway"/>
</dbReference>
<dbReference type="GO" id="GO:0071555">
    <property type="term" value="P:cell wall organization"/>
    <property type="evidence" value="ECO:0007669"/>
    <property type="project" value="UniProtKB-KW"/>
</dbReference>
<dbReference type="CDD" id="cd05233">
    <property type="entry name" value="SDR_c"/>
    <property type="match status" value="1"/>
</dbReference>
<dbReference type="FunFam" id="3.40.50.720:FF:000419">
    <property type="entry name" value="Decaprenylphosphoryl-D-2-keto erythropentose reductase"/>
    <property type="match status" value="1"/>
</dbReference>
<dbReference type="Gene3D" id="3.40.50.720">
    <property type="entry name" value="NAD(P)-binding Rossmann-like Domain"/>
    <property type="match status" value="1"/>
</dbReference>
<dbReference type="InterPro" id="IPR036291">
    <property type="entry name" value="NAD(P)-bd_dom_sf"/>
</dbReference>
<dbReference type="InterPro" id="IPR020904">
    <property type="entry name" value="Sc_DH/Rdtase_CS"/>
</dbReference>
<dbReference type="InterPro" id="IPR002347">
    <property type="entry name" value="SDR_fam"/>
</dbReference>
<dbReference type="NCBIfam" id="NF005912">
    <property type="entry name" value="PRK07904.1"/>
    <property type="match status" value="1"/>
</dbReference>
<dbReference type="PANTHER" id="PTHR43669">
    <property type="entry name" value="5-KETO-D-GLUCONATE 5-REDUCTASE"/>
    <property type="match status" value="1"/>
</dbReference>
<dbReference type="PANTHER" id="PTHR43669:SF6">
    <property type="entry name" value="DECAPRENYLPHOSPHORYL-2-KETO-BETA-D-ERYTHRO-PENTOSE REDUCTASE"/>
    <property type="match status" value="1"/>
</dbReference>
<dbReference type="Pfam" id="PF00106">
    <property type="entry name" value="adh_short"/>
    <property type="match status" value="1"/>
</dbReference>
<dbReference type="PRINTS" id="PR00081">
    <property type="entry name" value="GDHRDH"/>
</dbReference>
<dbReference type="SUPFAM" id="SSF51735">
    <property type="entry name" value="NAD(P)-binding Rossmann-fold domains"/>
    <property type="match status" value="1"/>
</dbReference>
<dbReference type="PROSITE" id="PS00061">
    <property type="entry name" value="ADH_SHORT"/>
    <property type="match status" value="1"/>
</dbReference>
<sequence length="254" mass="27469">MVLDAVGNPQTVLLLGGTSEIGLAICERYLHNSAARIVLACLPDDPRREDAAAAMKQAGARSVELIDFDALDTDSHPKMIEAAFSGGDVDVAIVAFGLLGDAEELWQNQRKAVQIAEINYTAAVSVGVLLAEKMRAQGFGQIIAMSSAAGERVRRANFVYGSTKAGLDGFYLGLSEALREYGVRVLVIRPGQVRTRMSAHLKEAPLTVDKEYVANLAVTASAKGKELVWAPAAFRYVMMVLRHIPRSIFRKLPI</sequence>
<evidence type="ECO:0000250" key="1">
    <source>
        <dbReference type="UniProtKB" id="A0R610"/>
    </source>
</evidence>
<evidence type="ECO:0000250" key="2">
    <source>
        <dbReference type="UniProtKB" id="P00334"/>
    </source>
</evidence>
<evidence type="ECO:0000250" key="3">
    <source>
        <dbReference type="UniProtKB" id="P9WGS9"/>
    </source>
</evidence>
<evidence type="ECO:0000255" key="4">
    <source>
        <dbReference type="PROSITE-ProRule" id="PRU10001"/>
    </source>
</evidence>
<evidence type="ECO:0000305" key="5"/>
<keyword id="KW-0961">Cell wall biogenesis/degradation</keyword>
<keyword id="KW-0520">NAD</keyword>
<keyword id="KW-0560">Oxidoreductase</keyword>
<keyword id="KW-0574">Periplasm</keyword>
<keyword id="KW-1185">Reference proteome</keyword>
<protein>
    <recommendedName>
        <fullName evidence="3">Decaprenylphosphoryl-2-keto-beta-D-erythro-pentose reductase</fullName>
        <ecNumber evidence="1">1.1.1.333</ecNumber>
    </recommendedName>
    <alternativeName>
        <fullName evidence="3">Decaprenyl-phospho-2'-keto-D-arabinose reductase</fullName>
    </alternativeName>
    <alternativeName>
        <fullName evidence="3">Decaprenylphospho-beta-D-erythro-pentofuranosid-2-ulose 2-reductase</fullName>
    </alternativeName>
    <alternativeName>
        <fullName evidence="3">Decaprenylphosphoryl-beta-D-ribofuranose 2'-epimerase subunit DprE2</fullName>
        <shortName evidence="3">Decaprenyl-phosphoribose 2'-epimerase subunit 2</shortName>
    </alternativeName>
    <alternativeName>
        <fullName evidence="3">NAD-dependent decaprenylphosphoryl-D-2-keto-erythropentose reductase</fullName>
    </alternativeName>
</protein>
<name>DPRE2_MYCTO</name>
<gene>
    <name evidence="1" type="primary">dprE2</name>
    <name type="ordered locus">MT3899</name>
</gene>
<reference key="1">
    <citation type="journal article" date="2002" name="J. Bacteriol.">
        <title>Whole-genome comparison of Mycobacterium tuberculosis clinical and laboratory strains.</title>
        <authorList>
            <person name="Fleischmann R.D."/>
            <person name="Alland D."/>
            <person name="Eisen J.A."/>
            <person name="Carpenter L."/>
            <person name="White O."/>
            <person name="Peterson J.D."/>
            <person name="DeBoy R.T."/>
            <person name="Dodson R.J."/>
            <person name="Gwinn M.L."/>
            <person name="Haft D.H."/>
            <person name="Hickey E.K."/>
            <person name="Kolonay J.F."/>
            <person name="Nelson W.C."/>
            <person name="Umayam L.A."/>
            <person name="Ermolaeva M.D."/>
            <person name="Salzberg S.L."/>
            <person name="Delcher A."/>
            <person name="Utterback T.R."/>
            <person name="Weidman J.F."/>
            <person name="Khouri H.M."/>
            <person name="Gill J."/>
            <person name="Mikula A."/>
            <person name="Bishai W."/>
            <person name="Jacobs W.R. Jr."/>
            <person name="Venter J.C."/>
            <person name="Fraser C.M."/>
        </authorList>
    </citation>
    <scope>NUCLEOTIDE SEQUENCE [LARGE SCALE GENOMIC DNA]</scope>
    <source>
        <strain>CDC 1551 / Oshkosh</strain>
    </source>
</reference>
<proteinExistence type="inferred from homology"/>
<accession>P9WGS8</accession>
<accession>L0TGS1</accession>
<accession>P66783</accession>
<accession>P72057</accession>
<comment type="function">
    <text evidence="3">Component of the DprE1-DprE2 complex that catalyzes the 2-step epimerization of decaprenyl-phospho-ribose (DPR) to decaprenyl-phospho-arabinose (DPA), a key precursor that serves as the arabinose donor required for the synthesis of cell-wall arabinans. DprE1 catalyzes the first step of epimerization, namely FAD-dependent oxidation of the C2' hydroxyl of DPR to yield the keto intermediate decaprenyl-phospho-2'-keto-D-arabinose (DPX). The intermediate DPX is then transferred to DprE2 subunit of the epimerase complex, most probably through a 'substrate channel' at the interface of DprE1-DprE2 complex. DprE2 then catalyzes the second step of epimerization, the NAD(+)-dependent reduction of DPX that leads to the formation of DPA.</text>
</comment>
<comment type="catalytic activity">
    <reaction evidence="1">
        <text>trans,octa-cis-decaprenylphospho-beta-D-arabinofuranose + NAD(+) = trans,octa-cis-decaprenylphospho-beta-D-erythro-pentofuranosid-2-ulose + NADH + H(+)</text>
        <dbReference type="Rhea" id="RHEA:33895"/>
        <dbReference type="ChEBI" id="CHEBI:15378"/>
        <dbReference type="ChEBI" id="CHEBI:57540"/>
        <dbReference type="ChEBI" id="CHEBI:57945"/>
        <dbReference type="ChEBI" id="CHEBI:65066"/>
        <dbReference type="ChEBI" id="CHEBI:65067"/>
        <dbReference type="EC" id="1.1.1.333"/>
    </reaction>
</comment>
<comment type="pathway">
    <text evidence="3">Cell wall biogenesis; cell wall polysaccharide biosynthesis.</text>
</comment>
<comment type="subunit">
    <text evidence="3">Interacts with DprE1 to form an epimerase complex.</text>
</comment>
<comment type="subcellular location">
    <subcellularLocation>
        <location evidence="3">Periplasm</location>
    </subcellularLocation>
</comment>
<comment type="similarity">
    <text evidence="5">Belongs to the short-chain dehydrogenases/reductases (SDR) family.</text>
</comment>
<feature type="chain" id="PRO_0000428309" description="Decaprenylphosphoryl-2-keto-beta-D-erythro-pentose reductase">
    <location>
        <begin position="1"/>
        <end position="254"/>
    </location>
</feature>
<feature type="active site" description="Proton acceptor" evidence="4">
    <location>
        <position position="160"/>
    </location>
</feature>
<feature type="binding site" evidence="2">
    <location>
        <position position="67"/>
    </location>
    <ligand>
        <name>NAD(+)</name>
        <dbReference type="ChEBI" id="CHEBI:57540"/>
    </ligand>
</feature>
<feature type="binding site" evidence="2">
    <location>
        <position position="164"/>
    </location>
    <ligand>
        <name>NAD(+)</name>
        <dbReference type="ChEBI" id="CHEBI:57540"/>
    </ligand>
</feature>
<organism>
    <name type="scientific">Mycobacterium tuberculosis (strain CDC 1551 / Oshkosh)</name>
    <dbReference type="NCBI Taxonomy" id="83331"/>
    <lineage>
        <taxon>Bacteria</taxon>
        <taxon>Bacillati</taxon>
        <taxon>Actinomycetota</taxon>
        <taxon>Actinomycetes</taxon>
        <taxon>Mycobacteriales</taxon>
        <taxon>Mycobacteriaceae</taxon>
        <taxon>Mycobacterium</taxon>
        <taxon>Mycobacterium tuberculosis complex</taxon>
    </lineage>
</organism>